<gene>
    <name evidence="4" type="primary">Angel1</name>
</gene>
<accession>B2RYM0</accession>
<evidence type="ECO:0000255" key="1"/>
<evidence type="ECO:0000269" key="2">
    <source>
    </source>
</evidence>
<evidence type="ECO:0000305" key="3"/>
<evidence type="ECO:0000312" key="4">
    <source>
        <dbReference type="EMBL" id="AAI66827.1"/>
    </source>
</evidence>
<evidence type="ECO:0000312" key="5">
    <source>
        <dbReference type="RGD" id="1306238"/>
    </source>
</evidence>
<evidence type="ECO:0007744" key="6">
    <source>
    </source>
</evidence>
<dbReference type="EMBL" id="AABR03048643">
    <property type="status" value="NOT_ANNOTATED_CDS"/>
    <property type="molecule type" value="Genomic_DNA"/>
</dbReference>
<dbReference type="EMBL" id="AABR03049665">
    <property type="status" value="NOT_ANNOTATED_CDS"/>
    <property type="molecule type" value="Genomic_DNA"/>
</dbReference>
<dbReference type="EMBL" id="BC166827">
    <property type="protein sequence ID" value="AAI66827.1"/>
    <property type="molecule type" value="mRNA"/>
</dbReference>
<dbReference type="RefSeq" id="NP_001102187.1">
    <property type="nucleotide sequence ID" value="NM_001108717.1"/>
</dbReference>
<dbReference type="SMR" id="B2RYM0"/>
<dbReference type="FunCoup" id="B2RYM0">
    <property type="interactions" value="872"/>
</dbReference>
<dbReference type="STRING" id="10116.ENSRNOP00000072809"/>
<dbReference type="iPTMnet" id="B2RYM0"/>
<dbReference type="PhosphoSitePlus" id="B2RYM0"/>
<dbReference type="PaxDb" id="10116-ENSRNOP00000014635"/>
<dbReference type="PeptideAtlas" id="B2RYM0"/>
<dbReference type="Ensembl" id="ENSRNOT00000014635.5">
    <property type="protein sequence ID" value="ENSRNOP00000014635.3"/>
    <property type="gene ID" value="ENSRNOG00000010567.6"/>
</dbReference>
<dbReference type="GeneID" id="362765"/>
<dbReference type="KEGG" id="rno:362765"/>
<dbReference type="UCSC" id="RGD:1306238">
    <property type="organism name" value="rat"/>
</dbReference>
<dbReference type="AGR" id="RGD:1306238"/>
<dbReference type="CTD" id="23357"/>
<dbReference type="RGD" id="1306238">
    <property type="gene designation" value="Angel1"/>
</dbReference>
<dbReference type="eggNOG" id="KOG2338">
    <property type="taxonomic scope" value="Eukaryota"/>
</dbReference>
<dbReference type="GeneTree" id="ENSGT00940000159057"/>
<dbReference type="HOGENOM" id="CLU_016428_6_0_1"/>
<dbReference type="InParanoid" id="B2RYM0"/>
<dbReference type="OrthoDB" id="10253982at2759"/>
<dbReference type="PhylomeDB" id="B2RYM0"/>
<dbReference type="TreeFam" id="TF316126"/>
<dbReference type="PRO" id="PR:B2RYM0"/>
<dbReference type="Proteomes" id="UP000002494">
    <property type="component" value="Chromosome 6"/>
</dbReference>
<dbReference type="Bgee" id="ENSRNOG00000010567">
    <property type="expression patterns" value="Expressed in testis and 18 other cell types or tissues"/>
</dbReference>
<dbReference type="ExpressionAtlas" id="B2RYM0">
    <property type="expression patterns" value="baseline and differential"/>
</dbReference>
<dbReference type="GO" id="GO:0005801">
    <property type="term" value="C:cis-Golgi network"/>
    <property type="evidence" value="ECO:0000250"/>
    <property type="project" value="AgBase"/>
</dbReference>
<dbReference type="GO" id="GO:0005829">
    <property type="term" value="C:cytosol"/>
    <property type="evidence" value="ECO:0000250"/>
    <property type="project" value="AgBase"/>
</dbReference>
<dbReference type="GO" id="GO:0005783">
    <property type="term" value="C:endoplasmic reticulum"/>
    <property type="evidence" value="ECO:0000250"/>
    <property type="project" value="AgBase"/>
</dbReference>
<dbReference type="GO" id="GO:0005741">
    <property type="term" value="C:mitochondrial outer membrane"/>
    <property type="evidence" value="ECO:0000266"/>
    <property type="project" value="RGD"/>
</dbReference>
<dbReference type="GO" id="GO:0005634">
    <property type="term" value="C:nucleus"/>
    <property type="evidence" value="ECO:0000250"/>
    <property type="project" value="AgBase"/>
</dbReference>
<dbReference type="GO" id="GO:0048471">
    <property type="term" value="C:perinuclear region of cytoplasm"/>
    <property type="evidence" value="ECO:0000250"/>
    <property type="project" value="AgBase"/>
</dbReference>
<dbReference type="GO" id="GO:0003824">
    <property type="term" value="F:catalytic activity"/>
    <property type="evidence" value="ECO:0007669"/>
    <property type="project" value="InterPro"/>
</dbReference>
<dbReference type="GO" id="GO:0008190">
    <property type="term" value="F:eukaryotic initiation factor 4E binding"/>
    <property type="evidence" value="ECO:0000250"/>
    <property type="project" value="AgBase"/>
</dbReference>
<dbReference type="GO" id="GO:0003730">
    <property type="term" value="F:mRNA 3'-UTR binding"/>
    <property type="evidence" value="ECO:0000318"/>
    <property type="project" value="GO_Central"/>
</dbReference>
<dbReference type="GO" id="GO:0019904">
    <property type="term" value="F:protein domain specific binding"/>
    <property type="evidence" value="ECO:0000250"/>
    <property type="project" value="AgBase"/>
</dbReference>
<dbReference type="FunFam" id="3.60.10.10:FF:000025">
    <property type="entry name" value="Angel homolog 1 (Drosophila)"/>
    <property type="match status" value="1"/>
</dbReference>
<dbReference type="Gene3D" id="3.60.10.10">
    <property type="entry name" value="Endonuclease/exonuclease/phosphatase"/>
    <property type="match status" value="1"/>
</dbReference>
<dbReference type="InterPro" id="IPR050410">
    <property type="entry name" value="CCR4/nocturin_mRNA_transcr"/>
</dbReference>
<dbReference type="InterPro" id="IPR036691">
    <property type="entry name" value="Endo/exonu/phosph_ase_sf"/>
</dbReference>
<dbReference type="InterPro" id="IPR005135">
    <property type="entry name" value="Endo/exonuclease/phosphatase"/>
</dbReference>
<dbReference type="PANTHER" id="PTHR12121">
    <property type="entry name" value="CARBON CATABOLITE REPRESSOR PROTEIN 4"/>
    <property type="match status" value="1"/>
</dbReference>
<dbReference type="PANTHER" id="PTHR12121:SF28">
    <property type="entry name" value="PROTEIN ANGEL HOMOLOG 1"/>
    <property type="match status" value="1"/>
</dbReference>
<dbReference type="Pfam" id="PF03372">
    <property type="entry name" value="Exo_endo_phos"/>
    <property type="match status" value="1"/>
</dbReference>
<dbReference type="SUPFAM" id="SSF56219">
    <property type="entry name" value="DNase I-like"/>
    <property type="match status" value="1"/>
</dbReference>
<proteinExistence type="evidence at protein level"/>
<comment type="similarity">
    <text evidence="1">Belongs to the CCR4/nocturin family.</text>
</comment>
<reference evidence="3" key="1">
    <citation type="journal article" date="2004" name="Nature">
        <title>Genome sequence of the Brown Norway rat yields insights into mammalian evolution.</title>
        <authorList>
            <person name="Gibbs R.A."/>
            <person name="Weinstock G.M."/>
            <person name="Metzker M.L."/>
            <person name="Muzny D.M."/>
            <person name="Sodergren E.J."/>
            <person name="Scherer S."/>
            <person name="Scott G."/>
            <person name="Steffen D."/>
            <person name="Worley K.C."/>
            <person name="Burch P.E."/>
            <person name="Okwuonu G."/>
            <person name="Hines S."/>
            <person name="Lewis L."/>
            <person name="Deramo C."/>
            <person name="Delgado O."/>
            <person name="Dugan-Rocha S."/>
            <person name="Miner G."/>
            <person name="Morgan M."/>
            <person name="Hawes A."/>
            <person name="Gill R."/>
            <person name="Holt R.A."/>
            <person name="Adams M.D."/>
            <person name="Amanatides P.G."/>
            <person name="Baden-Tillson H."/>
            <person name="Barnstead M."/>
            <person name="Chin S."/>
            <person name="Evans C.A."/>
            <person name="Ferriera S."/>
            <person name="Fosler C."/>
            <person name="Glodek A."/>
            <person name="Gu Z."/>
            <person name="Jennings D."/>
            <person name="Kraft C.L."/>
            <person name="Nguyen T."/>
            <person name="Pfannkoch C.M."/>
            <person name="Sitter C."/>
            <person name="Sutton G.G."/>
            <person name="Venter J.C."/>
            <person name="Woodage T."/>
            <person name="Smith D."/>
            <person name="Lee H.-M."/>
            <person name="Gustafson E."/>
            <person name="Cahill P."/>
            <person name="Kana A."/>
            <person name="Doucette-Stamm L."/>
            <person name="Weinstock K."/>
            <person name="Fechtel K."/>
            <person name="Weiss R.B."/>
            <person name="Dunn D.M."/>
            <person name="Green E.D."/>
            <person name="Blakesley R.W."/>
            <person name="Bouffard G.G."/>
            <person name="De Jong P.J."/>
            <person name="Osoegawa K."/>
            <person name="Zhu B."/>
            <person name="Marra M."/>
            <person name="Schein J."/>
            <person name="Bosdet I."/>
            <person name="Fjell C."/>
            <person name="Jones S."/>
            <person name="Krzywinski M."/>
            <person name="Mathewson C."/>
            <person name="Siddiqui A."/>
            <person name="Wye N."/>
            <person name="McPherson J."/>
            <person name="Zhao S."/>
            <person name="Fraser C.M."/>
            <person name="Shetty J."/>
            <person name="Shatsman S."/>
            <person name="Geer K."/>
            <person name="Chen Y."/>
            <person name="Abramzon S."/>
            <person name="Nierman W.C."/>
            <person name="Havlak P.H."/>
            <person name="Chen R."/>
            <person name="Durbin K.J."/>
            <person name="Egan A."/>
            <person name="Ren Y."/>
            <person name="Song X.-Z."/>
            <person name="Li B."/>
            <person name="Liu Y."/>
            <person name="Qin X."/>
            <person name="Cawley S."/>
            <person name="Cooney A.J."/>
            <person name="D'Souza L.M."/>
            <person name="Martin K."/>
            <person name="Wu J.Q."/>
            <person name="Gonzalez-Garay M.L."/>
            <person name="Jackson A.R."/>
            <person name="Kalafus K.J."/>
            <person name="McLeod M.P."/>
            <person name="Milosavljevic A."/>
            <person name="Virk D."/>
            <person name="Volkov A."/>
            <person name="Wheeler D.A."/>
            <person name="Zhang Z."/>
            <person name="Bailey J.A."/>
            <person name="Eichler E.E."/>
            <person name="Tuzun E."/>
            <person name="Birney E."/>
            <person name="Mongin E."/>
            <person name="Ureta-Vidal A."/>
            <person name="Woodwark C."/>
            <person name="Zdobnov E."/>
            <person name="Bork P."/>
            <person name="Suyama M."/>
            <person name="Torrents D."/>
            <person name="Alexandersson M."/>
            <person name="Trask B.J."/>
            <person name="Young J.M."/>
            <person name="Huang H."/>
            <person name="Wang H."/>
            <person name="Xing H."/>
            <person name="Daniels S."/>
            <person name="Gietzen D."/>
            <person name="Schmidt J."/>
            <person name="Stevens K."/>
            <person name="Vitt U."/>
            <person name="Wingrove J."/>
            <person name="Camara F."/>
            <person name="Mar Alba M."/>
            <person name="Abril J.F."/>
            <person name="Guigo R."/>
            <person name="Smit A."/>
            <person name="Dubchak I."/>
            <person name="Rubin E.M."/>
            <person name="Couronne O."/>
            <person name="Poliakov A."/>
            <person name="Huebner N."/>
            <person name="Ganten D."/>
            <person name="Goesele C."/>
            <person name="Hummel O."/>
            <person name="Kreitler T."/>
            <person name="Lee Y.-A."/>
            <person name="Monti J."/>
            <person name="Schulz H."/>
            <person name="Zimdahl H."/>
            <person name="Himmelbauer H."/>
            <person name="Lehrach H."/>
            <person name="Jacob H.J."/>
            <person name="Bromberg S."/>
            <person name="Gullings-Handley J."/>
            <person name="Jensen-Seaman M.I."/>
            <person name="Kwitek A.E."/>
            <person name="Lazar J."/>
            <person name="Pasko D."/>
            <person name="Tonellato P.J."/>
            <person name="Twigger S."/>
            <person name="Ponting C.P."/>
            <person name="Duarte J.M."/>
            <person name="Rice S."/>
            <person name="Goodstadt L."/>
            <person name="Beatson S.A."/>
            <person name="Emes R.D."/>
            <person name="Winter E.E."/>
            <person name="Webber C."/>
            <person name="Brandt P."/>
            <person name="Nyakatura G."/>
            <person name="Adetobi M."/>
            <person name="Chiaromonte F."/>
            <person name="Elnitski L."/>
            <person name="Eswara P."/>
            <person name="Hardison R.C."/>
            <person name="Hou M."/>
            <person name="Kolbe D."/>
            <person name="Makova K."/>
            <person name="Miller W."/>
            <person name="Nekrutenko A."/>
            <person name="Riemer C."/>
            <person name="Schwartz S."/>
            <person name="Taylor J."/>
            <person name="Yang S."/>
            <person name="Zhang Y."/>
            <person name="Lindpaintner K."/>
            <person name="Andrews T.D."/>
            <person name="Caccamo M."/>
            <person name="Clamp M."/>
            <person name="Clarke L."/>
            <person name="Curwen V."/>
            <person name="Durbin R.M."/>
            <person name="Eyras E."/>
            <person name="Searle S.M."/>
            <person name="Cooper G.M."/>
            <person name="Batzoglou S."/>
            <person name="Brudno M."/>
            <person name="Sidow A."/>
            <person name="Stone E.A."/>
            <person name="Payseur B.A."/>
            <person name="Bourque G."/>
            <person name="Lopez-Otin C."/>
            <person name="Puente X.S."/>
            <person name="Chakrabarti K."/>
            <person name="Chatterji S."/>
            <person name="Dewey C."/>
            <person name="Pachter L."/>
            <person name="Bray N."/>
            <person name="Yap V.B."/>
            <person name="Caspi A."/>
            <person name="Tesler G."/>
            <person name="Pevzner P.A."/>
            <person name="Haussler D."/>
            <person name="Roskin K.M."/>
            <person name="Baertsch R."/>
            <person name="Clawson H."/>
            <person name="Furey T.S."/>
            <person name="Hinrichs A.S."/>
            <person name="Karolchik D."/>
            <person name="Kent W.J."/>
            <person name="Rosenbloom K.R."/>
            <person name="Trumbower H."/>
            <person name="Weirauch M."/>
            <person name="Cooper D.N."/>
            <person name="Stenson P.D."/>
            <person name="Ma B."/>
            <person name="Brent M."/>
            <person name="Arumugam M."/>
            <person name="Shteynberg D."/>
            <person name="Copley R.R."/>
            <person name="Taylor M.S."/>
            <person name="Riethman H."/>
            <person name="Mudunuri U."/>
            <person name="Peterson J."/>
            <person name="Guyer M."/>
            <person name="Felsenfeld A."/>
            <person name="Old S."/>
            <person name="Mockrin S."/>
            <person name="Collins F.S."/>
        </authorList>
    </citation>
    <scope>NUCLEOTIDE SEQUENCE [LARGE SCALE GENOMIC DNA]</scope>
    <source>
        <strain evidence="2">Brown Norway</strain>
    </source>
</reference>
<reference evidence="3 4" key="2">
    <citation type="journal article" date="2004" name="Genome Res.">
        <title>The status, quality, and expansion of the NIH full-length cDNA project: the Mammalian Gene Collection (MGC).</title>
        <authorList>
            <consortium name="The MGC Project Team"/>
        </authorList>
    </citation>
    <scope>NUCLEOTIDE SEQUENCE [LARGE SCALE MRNA] OF 472-667</scope>
    <source>
        <strain evidence="4">Brown Norway/NHsdMcwi</strain>
        <tissue evidence="4">Embryonic liver</tissue>
    </source>
</reference>
<reference key="3">
    <citation type="journal article" date="2012" name="Nat. Commun.">
        <title>Quantitative maps of protein phosphorylation sites across 14 different rat organs and tissues.</title>
        <authorList>
            <person name="Lundby A."/>
            <person name="Secher A."/>
            <person name="Lage K."/>
            <person name="Nordsborg N.B."/>
            <person name="Dmytriyev A."/>
            <person name="Lundby C."/>
            <person name="Olsen J.V."/>
        </authorList>
    </citation>
    <scope>PHOSPHORYLATION [LARGE SCALE ANALYSIS] AT SER-77 AND SER-105</scope>
    <scope>IDENTIFICATION BY MASS SPECTROMETRY [LARGE SCALE ANALYSIS]</scope>
</reference>
<organism>
    <name type="scientific">Rattus norvegicus</name>
    <name type="common">Rat</name>
    <dbReference type="NCBI Taxonomy" id="10116"/>
    <lineage>
        <taxon>Eukaryota</taxon>
        <taxon>Metazoa</taxon>
        <taxon>Chordata</taxon>
        <taxon>Craniata</taxon>
        <taxon>Vertebrata</taxon>
        <taxon>Euteleostomi</taxon>
        <taxon>Mammalia</taxon>
        <taxon>Eutheria</taxon>
        <taxon>Euarchontoglires</taxon>
        <taxon>Glires</taxon>
        <taxon>Rodentia</taxon>
        <taxon>Myomorpha</taxon>
        <taxon>Muroidea</taxon>
        <taxon>Muridae</taxon>
        <taxon>Murinae</taxon>
        <taxon>Rattus</taxon>
    </lineage>
</organism>
<protein>
    <recommendedName>
        <fullName evidence="5">Protein angel homolog 1</fullName>
    </recommendedName>
</protein>
<feature type="chain" id="PRO_0000356224" description="Protein angel homolog 1">
    <location>
        <begin position="1"/>
        <end position="667"/>
    </location>
</feature>
<feature type="modified residue" description="Phosphoserine" evidence="6">
    <location>
        <position position="77"/>
    </location>
</feature>
<feature type="modified residue" description="Phosphoserine" evidence="6">
    <location>
        <position position="105"/>
    </location>
</feature>
<keyword id="KW-0597">Phosphoprotein</keyword>
<keyword id="KW-1185">Reference proteome</keyword>
<name>ANGE1_RAT</name>
<sequence>MIASCLYYLLLPAARLFRFLSDAFFTCRKNALLAKSSSPQVEGNFAMAPRGPDQEECEGLLQQWREEGWNQTLSTASEGPLADKGLAESSLALLMDNSGEQDTASEDKWSSRQLSDLRAADNLDQPFPEVLGEEPLAEDEGPLWAAVPVQTGPQYADCAVLPMGAMAAEQWEEDPAMVAWSIAPEPMPQEETSMWPFEGLEQLQPPPMEIPYHEILWREWEDFSTQPDAQGLEAGDGPQFQFTLMSYNILAQDLMQQSSELYLHCHPDILNWNYRFANLMQEFQHWDPDILCLQEVQEDHYWEQLEPSLRMMGFTCFYKRRTGCKTDGCAVCYKPTRFRLLCASPVEYFRPGLELLNRDNVGLVLLLQPLVPEGLGQVSVAPLCVANTHVLYNPRRGDVKLAQMAILLAEVDKVARLSDGSHCPIILCGDLNSVPDSPLYNFIRDGELQYNGMPAWKVSGQEDFSHQLYQRKLQAPLWPSSLGITDCCQYVTSCHPKRSERLKYGRDFLLRFRFCDLACQRPVGLVLMEGVTDTKPDRPAGWAECIFEEEISELEPVFPRTIGTIQHCLHLTSVYTHFLPQHGRPEVTTMPLGLGMTVDYIFFSAESCENENRSDHRLDRDGTLKLLGRLSLLSEEILWAANGLPNPFYSSDHLCLLASFGMEVTAP</sequence>